<dbReference type="EC" id="3.5.3.23" evidence="1"/>
<dbReference type="EMBL" id="CP000822">
    <property type="protein sequence ID" value="ABV12900.1"/>
    <property type="molecule type" value="Genomic_DNA"/>
</dbReference>
<dbReference type="RefSeq" id="WP_012132637.1">
    <property type="nucleotide sequence ID" value="NC_009792.1"/>
</dbReference>
<dbReference type="SMR" id="A8AHD7"/>
<dbReference type="STRING" id="290338.CKO_01771"/>
<dbReference type="GeneID" id="45135793"/>
<dbReference type="KEGG" id="cko:CKO_01771"/>
<dbReference type="HOGENOM" id="CLU_053835_0_0_6"/>
<dbReference type="OrthoDB" id="248552at2"/>
<dbReference type="UniPathway" id="UPA00185">
    <property type="reaction ID" value="UER00280"/>
</dbReference>
<dbReference type="Proteomes" id="UP000008148">
    <property type="component" value="Chromosome"/>
</dbReference>
<dbReference type="GO" id="GO:0009015">
    <property type="term" value="F:N-succinylarginine dihydrolase activity"/>
    <property type="evidence" value="ECO:0007669"/>
    <property type="project" value="UniProtKB-UniRule"/>
</dbReference>
<dbReference type="GO" id="GO:0019544">
    <property type="term" value="P:arginine catabolic process to glutamate"/>
    <property type="evidence" value="ECO:0007669"/>
    <property type="project" value="UniProtKB-UniRule"/>
</dbReference>
<dbReference type="GO" id="GO:0019545">
    <property type="term" value="P:arginine catabolic process to succinate"/>
    <property type="evidence" value="ECO:0007669"/>
    <property type="project" value="UniProtKB-UniRule"/>
</dbReference>
<dbReference type="FunFam" id="3.75.10.20:FF:000001">
    <property type="entry name" value="N-succinylarginine dihydrolase"/>
    <property type="match status" value="1"/>
</dbReference>
<dbReference type="Gene3D" id="3.75.10.20">
    <property type="entry name" value="Succinylarginine dihydrolase"/>
    <property type="match status" value="1"/>
</dbReference>
<dbReference type="HAMAP" id="MF_01172">
    <property type="entry name" value="AstB"/>
    <property type="match status" value="1"/>
</dbReference>
<dbReference type="InterPro" id="IPR037031">
    <property type="entry name" value="AstB_sf"/>
</dbReference>
<dbReference type="InterPro" id="IPR007079">
    <property type="entry name" value="SuccinylArg_d-Hdrlase_AstB"/>
</dbReference>
<dbReference type="NCBIfam" id="TIGR03241">
    <property type="entry name" value="arg_catab_astB"/>
    <property type="match status" value="1"/>
</dbReference>
<dbReference type="NCBIfam" id="NF009789">
    <property type="entry name" value="PRK13281.1"/>
    <property type="match status" value="1"/>
</dbReference>
<dbReference type="PANTHER" id="PTHR30420">
    <property type="entry name" value="N-SUCCINYLARGININE DIHYDROLASE"/>
    <property type="match status" value="1"/>
</dbReference>
<dbReference type="PANTHER" id="PTHR30420:SF2">
    <property type="entry name" value="N-SUCCINYLARGININE DIHYDROLASE"/>
    <property type="match status" value="1"/>
</dbReference>
<dbReference type="Pfam" id="PF04996">
    <property type="entry name" value="AstB"/>
    <property type="match status" value="1"/>
</dbReference>
<dbReference type="SUPFAM" id="SSF55909">
    <property type="entry name" value="Pentein"/>
    <property type="match status" value="1"/>
</dbReference>
<sequence length="447" mass="49250">MKAHEVNFDGLVGLTHHYAGLSFGNEASIQHRFQVSNPRLAAKQGLLKMKALADAGFPQAVIPPHERPFIPVLRQLGFSGQDEQVLEKVARQAPHWLSSVSSASPMWVANAATVCPSADALDGKVHLTVANLNNKFHRALEAPTTASLLRAIFRDAQFFAVHDALPQVALLGDEGAANHNRLGGDYGAPGIQLFVYGREEGVDTRPVRYPARQTREASEAVARLNQVNPHQVIFARQNPDVIDLGVFHNDVIAVSNRQVLFCHEQAFAKQGELMRQLRSRVAGFMPLEVPAREVSVQDAVATYLFNSQLLSRDDGSMVLVLPQECREHAGVWRYLNALLAADNPISDLRVFDLRESMANGGGPACLRLRVVLTEDELRAVNPAVMMNDTLFSTLNDWVDRYYRDRLTAADLADPQLLREGREALDTLTQLLNLGSVYPFQQEGAGNG</sequence>
<evidence type="ECO:0000255" key="1">
    <source>
        <dbReference type="HAMAP-Rule" id="MF_01172"/>
    </source>
</evidence>
<proteinExistence type="inferred from homology"/>
<name>ASTB_CITK8</name>
<reference key="1">
    <citation type="submission" date="2007-08" db="EMBL/GenBank/DDBJ databases">
        <authorList>
            <consortium name="The Citrobacter koseri Genome Sequencing Project"/>
            <person name="McClelland M."/>
            <person name="Sanderson E.K."/>
            <person name="Porwollik S."/>
            <person name="Spieth J."/>
            <person name="Clifton W.S."/>
            <person name="Latreille P."/>
            <person name="Courtney L."/>
            <person name="Wang C."/>
            <person name="Pepin K."/>
            <person name="Bhonagiri V."/>
            <person name="Nash W."/>
            <person name="Johnson M."/>
            <person name="Thiruvilangam P."/>
            <person name="Wilson R."/>
        </authorList>
    </citation>
    <scope>NUCLEOTIDE SEQUENCE [LARGE SCALE GENOMIC DNA]</scope>
    <source>
        <strain>ATCC BAA-895 / CDC 4225-83 / SGSC4696</strain>
    </source>
</reference>
<accession>A8AHD7</accession>
<organism>
    <name type="scientific">Citrobacter koseri (strain ATCC BAA-895 / CDC 4225-83 / SGSC4696)</name>
    <dbReference type="NCBI Taxonomy" id="290338"/>
    <lineage>
        <taxon>Bacteria</taxon>
        <taxon>Pseudomonadati</taxon>
        <taxon>Pseudomonadota</taxon>
        <taxon>Gammaproteobacteria</taxon>
        <taxon>Enterobacterales</taxon>
        <taxon>Enterobacteriaceae</taxon>
        <taxon>Citrobacter</taxon>
    </lineage>
</organism>
<gene>
    <name evidence="1" type="primary">astB</name>
    <name type="ordered locus">CKO_01771</name>
</gene>
<feature type="chain" id="PRO_1000065722" description="N-succinylarginine dihydrolase">
    <location>
        <begin position="1"/>
        <end position="447"/>
    </location>
</feature>
<feature type="active site" evidence="1">
    <location>
        <position position="174"/>
    </location>
</feature>
<feature type="active site" evidence="1">
    <location>
        <position position="248"/>
    </location>
</feature>
<feature type="active site" description="Nucleophile" evidence="1">
    <location>
        <position position="365"/>
    </location>
</feature>
<feature type="binding site" evidence="1">
    <location>
        <begin position="19"/>
        <end position="28"/>
    </location>
    <ligand>
        <name>substrate</name>
    </ligand>
</feature>
<feature type="binding site" evidence="1">
    <location>
        <position position="110"/>
    </location>
    <ligand>
        <name>substrate</name>
    </ligand>
</feature>
<feature type="binding site" evidence="1">
    <location>
        <begin position="137"/>
        <end position="138"/>
    </location>
    <ligand>
        <name>substrate</name>
    </ligand>
</feature>
<feature type="binding site" evidence="1">
    <location>
        <position position="212"/>
    </location>
    <ligand>
        <name>substrate</name>
    </ligand>
</feature>
<feature type="binding site" evidence="1">
    <location>
        <position position="250"/>
    </location>
    <ligand>
        <name>substrate</name>
    </ligand>
</feature>
<feature type="binding site" evidence="1">
    <location>
        <position position="359"/>
    </location>
    <ligand>
        <name>substrate</name>
    </ligand>
</feature>
<comment type="function">
    <text evidence="1">Catalyzes the hydrolysis of N(2)-succinylarginine into N(2)-succinylornithine, ammonia and CO(2).</text>
</comment>
<comment type="catalytic activity">
    <reaction evidence="1">
        <text>N(2)-succinyl-L-arginine + 2 H2O + 2 H(+) = N(2)-succinyl-L-ornithine + 2 NH4(+) + CO2</text>
        <dbReference type="Rhea" id="RHEA:19533"/>
        <dbReference type="ChEBI" id="CHEBI:15377"/>
        <dbReference type="ChEBI" id="CHEBI:15378"/>
        <dbReference type="ChEBI" id="CHEBI:16526"/>
        <dbReference type="ChEBI" id="CHEBI:28938"/>
        <dbReference type="ChEBI" id="CHEBI:58241"/>
        <dbReference type="ChEBI" id="CHEBI:58514"/>
        <dbReference type="EC" id="3.5.3.23"/>
    </reaction>
</comment>
<comment type="pathway">
    <text evidence="1">Amino-acid degradation; L-arginine degradation via AST pathway; L-glutamate and succinate from L-arginine: step 2/5.</text>
</comment>
<comment type="subunit">
    <text evidence="1">Homodimer.</text>
</comment>
<comment type="similarity">
    <text evidence="1">Belongs to the succinylarginine dihydrolase family.</text>
</comment>
<keyword id="KW-0056">Arginine metabolism</keyword>
<keyword id="KW-0378">Hydrolase</keyword>
<keyword id="KW-1185">Reference proteome</keyword>
<protein>
    <recommendedName>
        <fullName evidence="1">N-succinylarginine dihydrolase</fullName>
        <ecNumber evidence="1">3.5.3.23</ecNumber>
    </recommendedName>
</protein>